<accession>A7Z206</accession>
<reference key="1">
    <citation type="journal article" date="2007" name="Nat. Biotechnol.">
        <title>Comparative analysis of the complete genome sequence of the plant growth-promoting bacterium Bacillus amyloliquefaciens FZB42.</title>
        <authorList>
            <person name="Chen X.H."/>
            <person name="Koumoutsi A."/>
            <person name="Scholz R."/>
            <person name="Eisenreich A."/>
            <person name="Schneider K."/>
            <person name="Heinemeyer I."/>
            <person name="Morgenstern B."/>
            <person name="Voss B."/>
            <person name="Hess W.R."/>
            <person name="Reva O."/>
            <person name="Junge H."/>
            <person name="Voigt B."/>
            <person name="Jungblut P.R."/>
            <person name="Vater J."/>
            <person name="Suessmuth R."/>
            <person name="Liesegang H."/>
            <person name="Strittmatter A."/>
            <person name="Gottschalk G."/>
            <person name="Borriss R."/>
        </authorList>
    </citation>
    <scope>NUCLEOTIDE SEQUENCE [LARGE SCALE GENOMIC DNA]</scope>
    <source>
        <strain>DSM 23117 / BGSC 10A6 / LMG 26770 / FZB42</strain>
    </source>
</reference>
<keyword id="KW-0143">Chaperone</keyword>
<keyword id="KW-0963">Cytoplasm</keyword>
<protein>
    <recommendedName>
        <fullName evidence="1">Co-chaperonin GroES</fullName>
    </recommendedName>
    <alternativeName>
        <fullName evidence="1">10 kDa chaperonin</fullName>
    </alternativeName>
    <alternativeName>
        <fullName evidence="1">Chaperonin-10</fullName>
        <shortName evidence="1">Cpn10</shortName>
    </alternativeName>
</protein>
<organism>
    <name type="scientific">Bacillus velezensis (strain DSM 23117 / BGSC 10A6 / LMG 26770 / FZB42)</name>
    <name type="common">Bacillus amyloliquefaciens subsp. plantarum</name>
    <dbReference type="NCBI Taxonomy" id="326423"/>
    <lineage>
        <taxon>Bacteria</taxon>
        <taxon>Bacillati</taxon>
        <taxon>Bacillota</taxon>
        <taxon>Bacilli</taxon>
        <taxon>Bacillales</taxon>
        <taxon>Bacillaceae</taxon>
        <taxon>Bacillus</taxon>
        <taxon>Bacillus amyloliquefaciens group</taxon>
    </lineage>
</organism>
<feature type="chain" id="PRO_1000025208" description="Co-chaperonin GroES">
    <location>
        <begin position="1"/>
        <end position="94"/>
    </location>
</feature>
<proteinExistence type="inferred from homology"/>
<gene>
    <name evidence="1" type="primary">groES</name>
    <name evidence="1" type="synonym">groS</name>
    <name type="ordered locus">RBAM_006470</name>
</gene>
<sequence>MLKPLGDRVVIELVESEEKTASGIVLPDSAKEKPQEGKIVAAGSGRVLESGERVALEVKEGDRIIFSKYAGTEVKYEGTEYLILRESDILAVIG</sequence>
<evidence type="ECO:0000255" key="1">
    <source>
        <dbReference type="HAMAP-Rule" id="MF_00580"/>
    </source>
</evidence>
<dbReference type="EMBL" id="CP000560">
    <property type="protein sequence ID" value="ABS73032.1"/>
    <property type="molecule type" value="Genomic_DNA"/>
</dbReference>
<dbReference type="RefSeq" id="WP_003155970.1">
    <property type="nucleotide sequence ID" value="NC_009725.2"/>
</dbReference>
<dbReference type="SMR" id="A7Z206"/>
<dbReference type="GeneID" id="93079782"/>
<dbReference type="KEGG" id="bay:RBAM_006470"/>
<dbReference type="HOGENOM" id="CLU_132825_2_0_9"/>
<dbReference type="Proteomes" id="UP000001120">
    <property type="component" value="Chromosome"/>
</dbReference>
<dbReference type="GO" id="GO:0005737">
    <property type="term" value="C:cytoplasm"/>
    <property type="evidence" value="ECO:0007669"/>
    <property type="project" value="UniProtKB-SubCell"/>
</dbReference>
<dbReference type="GO" id="GO:0005524">
    <property type="term" value="F:ATP binding"/>
    <property type="evidence" value="ECO:0007669"/>
    <property type="project" value="InterPro"/>
</dbReference>
<dbReference type="GO" id="GO:0046872">
    <property type="term" value="F:metal ion binding"/>
    <property type="evidence" value="ECO:0007669"/>
    <property type="project" value="TreeGrafter"/>
</dbReference>
<dbReference type="GO" id="GO:0044183">
    <property type="term" value="F:protein folding chaperone"/>
    <property type="evidence" value="ECO:0007669"/>
    <property type="project" value="InterPro"/>
</dbReference>
<dbReference type="GO" id="GO:0051087">
    <property type="term" value="F:protein-folding chaperone binding"/>
    <property type="evidence" value="ECO:0007669"/>
    <property type="project" value="TreeGrafter"/>
</dbReference>
<dbReference type="GO" id="GO:0051082">
    <property type="term" value="F:unfolded protein binding"/>
    <property type="evidence" value="ECO:0007669"/>
    <property type="project" value="TreeGrafter"/>
</dbReference>
<dbReference type="GO" id="GO:0051085">
    <property type="term" value="P:chaperone cofactor-dependent protein refolding"/>
    <property type="evidence" value="ECO:0007669"/>
    <property type="project" value="TreeGrafter"/>
</dbReference>
<dbReference type="CDD" id="cd00320">
    <property type="entry name" value="cpn10"/>
    <property type="match status" value="1"/>
</dbReference>
<dbReference type="FunFam" id="2.30.33.40:FF:000001">
    <property type="entry name" value="10 kDa chaperonin"/>
    <property type="match status" value="1"/>
</dbReference>
<dbReference type="Gene3D" id="2.30.33.40">
    <property type="entry name" value="GroES chaperonin"/>
    <property type="match status" value="1"/>
</dbReference>
<dbReference type="HAMAP" id="MF_00580">
    <property type="entry name" value="CH10"/>
    <property type="match status" value="1"/>
</dbReference>
<dbReference type="InterPro" id="IPR020818">
    <property type="entry name" value="Chaperonin_GroES"/>
</dbReference>
<dbReference type="InterPro" id="IPR037124">
    <property type="entry name" value="Chaperonin_GroES_sf"/>
</dbReference>
<dbReference type="InterPro" id="IPR018369">
    <property type="entry name" value="Chaprnonin_Cpn10_CS"/>
</dbReference>
<dbReference type="InterPro" id="IPR011032">
    <property type="entry name" value="GroES-like_sf"/>
</dbReference>
<dbReference type="NCBIfam" id="NF001527">
    <property type="entry name" value="PRK00364.1-2"/>
    <property type="match status" value="1"/>
</dbReference>
<dbReference type="NCBIfam" id="NF001530">
    <property type="entry name" value="PRK00364.1-6"/>
    <property type="match status" value="1"/>
</dbReference>
<dbReference type="NCBIfam" id="NF001531">
    <property type="entry name" value="PRK00364.2-2"/>
    <property type="match status" value="1"/>
</dbReference>
<dbReference type="NCBIfam" id="NF001532">
    <property type="entry name" value="PRK00364.2-3"/>
    <property type="match status" value="1"/>
</dbReference>
<dbReference type="NCBIfam" id="NF001533">
    <property type="entry name" value="PRK00364.2-4"/>
    <property type="match status" value="1"/>
</dbReference>
<dbReference type="NCBIfam" id="NF001534">
    <property type="entry name" value="PRK00364.2-5"/>
    <property type="match status" value="1"/>
</dbReference>
<dbReference type="PANTHER" id="PTHR10772">
    <property type="entry name" value="10 KDA HEAT SHOCK PROTEIN"/>
    <property type="match status" value="1"/>
</dbReference>
<dbReference type="PANTHER" id="PTHR10772:SF58">
    <property type="entry name" value="CO-CHAPERONIN GROES"/>
    <property type="match status" value="1"/>
</dbReference>
<dbReference type="Pfam" id="PF00166">
    <property type="entry name" value="Cpn10"/>
    <property type="match status" value="1"/>
</dbReference>
<dbReference type="PRINTS" id="PR00297">
    <property type="entry name" value="CHAPERONIN10"/>
</dbReference>
<dbReference type="SMART" id="SM00883">
    <property type="entry name" value="Cpn10"/>
    <property type="match status" value="1"/>
</dbReference>
<dbReference type="SUPFAM" id="SSF50129">
    <property type="entry name" value="GroES-like"/>
    <property type="match status" value="1"/>
</dbReference>
<dbReference type="PROSITE" id="PS00681">
    <property type="entry name" value="CHAPERONINS_CPN10"/>
    <property type="match status" value="1"/>
</dbReference>
<name>CH10_BACVZ</name>
<comment type="function">
    <text evidence="1">Together with the chaperonin GroEL, plays an essential role in assisting protein folding. The GroEL-GroES system forms a nano-cage that allows encapsulation of the non-native substrate proteins and provides a physical environment optimized to promote and accelerate protein folding. GroES binds to the apical surface of the GroEL ring, thereby capping the opening of the GroEL channel.</text>
</comment>
<comment type="subunit">
    <text evidence="1">Heptamer of 7 subunits arranged in a ring. Interacts with the chaperonin GroEL.</text>
</comment>
<comment type="subcellular location">
    <subcellularLocation>
        <location evidence="1">Cytoplasm</location>
    </subcellularLocation>
</comment>
<comment type="similarity">
    <text evidence="1">Belongs to the GroES chaperonin family.</text>
</comment>